<gene>
    <name type="ordered locus">SAB0304</name>
</gene>
<comment type="catalytic activity">
    <reaction evidence="2">
        <text>2 acetyl-CoA = acetoacetyl-CoA + CoA</text>
        <dbReference type="Rhea" id="RHEA:21036"/>
        <dbReference type="ChEBI" id="CHEBI:57286"/>
        <dbReference type="ChEBI" id="CHEBI:57287"/>
        <dbReference type="ChEBI" id="CHEBI:57288"/>
        <dbReference type="EC" id="2.3.1.9"/>
    </reaction>
</comment>
<comment type="subcellular location">
    <subcellularLocation>
        <location evidence="1">Cytoplasm</location>
    </subcellularLocation>
</comment>
<comment type="similarity">
    <text evidence="3">Belongs to the thiolase-like superfamily. Thiolase family.</text>
</comment>
<accession>Q2YVF5</accession>
<name>THLA_STAAB</name>
<dbReference type="EC" id="2.3.1.9"/>
<dbReference type="EMBL" id="AJ938182">
    <property type="protein sequence ID" value="CAI79992.1"/>
    <property type="molecule type" value="Genomic_DNA"/>
</dbReference>
<dbReference type="RefSeq" id="WP_000199088.1">
    <property type="nucleotide sequence ID" value="NC_007622.1"/>
</dbReference>
<dbReference type="SMR" id="Q2YVF5"/>
<dbReference type="KEGG" id="sab:SAB0304"/>
<dbReference type="HOGENOM" id="CLU_031026_0_0_9"/>
<dbReference type="GO" id="GO:0005737">
    <property type="term" value="C:cytoplasm"/>
    <property type="evidence" value="ECO:0007669"/>
    <property type="project" value="UniProtKB-SubCell"/>
</dbReference>
<dbReference type="GO" id="GO:0003985">
    <property type="term" value="F:acetyl-CoA C-acetyltransferase activity"/>
    <property type="evidence" value="ECO:0007669"/>
    <property type="project" value="UniProtKB-EC"/>
</dbReference>
<dbReference type="CDD" id="cd00751">
    <property type="entry name" value="thiolase"/>
    <property type="match status" value="1"/>
</dbReference>
<dbReference type="FunFam" id="3.40.47.10:FF:000010">
    <property type="entry name" value="Acetyl-CoA acetyltransferase (Thiolase)"/>
    <property type="match status" value="1"/>
</dbReference>
<dbReference type="Gene3D" id="3.40.47.10">
    <property type="match status" value="2"/>
</dbReference>
<dbReference type="InterPro" id="IPR002155">
    <property type="entry name" value="Thiolase"/>
</dbReference>
<dbReference type="InterPro" id="IPR016039">
    <property type="entry name" value="Thiolase-like"/>
</dbReference>
<dbReference type="InterPro" id="IPR020615">
    <property type="entry name" value="Thiolase_acyl_enz_int_AS"/>
</dbReference>
<dbReference type="InterPro" id="IPR020610">
    <property type="entry name" value="Thiolase_AS"/>
</dbReference>
<dbReference type="InterPro" id="IPR020617">
    <property type="entry name" value="Thiolase_C"/>
</dbReference>
<dbReference type="InterPro" id="IPR020613">
    <property type="entry name" value="Thiolase_CS"/>
</dbReference>
<dbReference type="InterPro" id="IPR020616">
    <property type="entry name" value="Thiolase_N"/>
</dbReference>
<dbReference type="NCBIfam" id="TIGR01930">
    <property type="entry name" value="AcCoA-C-Actrans"/>
    <property type="match status" value="1"/>
</dbReference>
<dbReference type="PANTHER" id="PTHR18919:SF107">
    <property type="entry name" value="ACETYL-COA ACETYLTRANSFERASE, CYTOSOLIC"/>
    <property type="match status" value="1"/>
</dbReference>
<dbReference type="PANTHER" id="PTHR18919">
    <property type="entry name" value="ACETYL-COA C-ACYLTRANSFERASE"/>
    <property type="match status" value="1"/>
</dbReference>
<dbReference type="Pfam" id="PF02803">
    <property type="entry name" value="Thiolase_C"/>
    <property type="match status" value="1"/>
</dbReference>
<dbReference type="Pfam" id="PF00108">
    <property type="entry name" value="Thiolase_N"/>
    <property type="match status" value="1"/>
</dbReference>
<dbReference type="PIRSF" id="PIRSF000429">
    <property type="entry name" value="Ac-CoA_Ac_transf"/>
    <property type="match status" value="1"/>
</dbReference>
<dbReference type="SUPFAM" id="SSF53901">
    <property type="entry name" value="Thiolase-like"/>
    <property type="match status" value="2"/>
</dbReference>
<dbReference type="PROSITE" id="PS00098">
    <property type="entry name" value="THIOLASE_1"/>
    <property type="match status" value="1"/>
</dbReference>
<dbReference type="PROSITE" id="PS00737">
    <property type="entry name" value="THIOLASE_2"/>
    <property type="match status" value="1"/>
</dbReference>
<dbReference type="PROSITE" id="PS00099">
    <property type="entry name" value="THIOLASE_3"/>
    <property type="match status" value="1"/>
</dbReference>
<feature type="chain" id="PRO_0000270502" description="Probable acetyl-CoA acyltransferase">
    <location>
        <begin position="1"/>
        <end position="393"/>
    </location>
</feature>
<feature type="active site" description="Acyl-thioester intermediate" evidence="1">
    <location>
        <position position="88"/>
    </location>
</feature>
<feature type="active site" description="Proton acceptor" evidence="2">
    <location>
        <position position="349"/>
    </location>
</feature>
<feature type="active site" description="Proton acceptor" evidence="2">
    <location>
        <position position="378"/>
    </location>
</feature>
<sequence length="393" mass="41589">MTRVVLAAAYRTPIGVFGGAFKDVPAYDLGATLIEHIIKETGLNPSEINEVIIGNVLQAGQGQNPARIAAMKGGLPETVPVFTVNKVCGSGLKSIQLAYQSIVTGENDIVLAGGMENMSQSPMLVNNSRFGFKMGHQSMVDSMVYDGLTDVFNQYHMGITAENLVEQYGISREEQDTFAVNSQKKAANAQQNGGFDSEIVPVSIPQRKGEPIVVTKDEGVRENVSVEKLSRLRPAFKKDGTVTAGNASGINDGAAMMLVMSEDKAKELNIEPLAVLDGFGSHGVDPSIMGIAPVGAVEKALKRSKKELSDIDVFELNEAFAAQSLAVDRELKLPPEKVNVKGGAIALGHPIGASGARVLVTLLHQLNDEVETGLTSLCIGGGQAIAAVVSKYK</sequence>
<protein>
    <recommendedName>
        <fullName>Probable acetyl-CoA acyltransferase</fullName>
        <ecNumber>2.3.1.9</ecNumber>
    </recommendedName>
    <alternativeName>
        <fullName>Acetoacetyl-CoA thiolase</fullName>
    </alternativeName>
</protein>
<reference key="1">
    <citation type="journal article" date="2007" name="PLoS ONE">
        <title>Molecular correlates of host specialization in Staphylococcus aureus.</title>
        <authorList>
            <person name="Herron-Olson L."/>
            <person name="Fitzgerald J.R."/>
            <person name="Musser J.M."/>
            <person name="Kapur V."/>
        </authorList>
    </citation>
    <scope>NUCLEOTIDE SEQUENCE [LARGE SCALE GENOMIC DNA]</scope>
    <source>
        <strain>bovine RF122 / ET3-1</strain>
    </source>
</reference>
<organism>
    <name type="scientific">Staphylococcus aureus (strain bovine RF122 / ET3-1)</name>
    <dbReference type="NCBI Taxonomy" id="273036"/>
    <lineage>
        <taxon>Bacteria</taxon>
        <taxon>Bacillati</taxon>
        <taxon>Bacillota</taxon>
        <taxon>Bacilli</taxon>
        <taxon>Bacillales</taxon>
        <taxon>Staphylococcaceae</taxon>
        <taxon>Staphylococcus</taxon>
    </lineage>
</organism>
<proteinExistence type="inferred from homology"/>
<keyword id="KW-0012">Acyltransferase</keyword>
<keyword id="KW-0963">Cytoplasm</keyword>
<keyword id="KW-0808">Transferase</keyword>
<evidence type="ECO:0000250" key="1"/>
<evidence type="ECO:0000255" key="2">
    <source>
        <dbReference type="PROSITE-ProRule" id="PRU10020"/>
    </source>
</evidence>
<evidence type="ECO:0000305" key="3"/>